<proteinExistence type="inferred from homology"/>
<feature type="chain" id="PRO_0000410721" description="Ion-translocating oxidoreductase complex subunit C">
    <location>
        <begin position="1"/>
        <end position="519"/>
    </location>
</feature>
<feature type="domain" description="4Fe-4S ferredoxin-type 1" evidence="1">
    <location>
        <begin position="372"/>
        <end position="401"/>
    </location>
</feature>
<feature type="domain" description="4Fe-4S ferredoxin-type 2" evidence="1">
    <location>
        <begin position="411"/>
        <end position="440"/>
    </location>
</feature>
<feature type="region of interest" description="Disordered" evidence="2">
    <location>
        <begin position="494"/>
        <end position="519"/>
    </location>
</feature>
<feature type="binding site" evidence="1">
    <location>
        <position position="381"/>
    </location>
    <ligand>
        <name>[4Fe-4S] cluster</name>
        <dbReference type="ChEBI" id="CHEBI:49883"/>
        <label>1</label>
    </ligand>
</feature>
<feature type="binding site" evidence="1">
    <location>
        <position position="384"/>
    </location>
    <ligand>
        <name>[4Fe-4S] cluster</name>
        <dbReference type="ChEBI" id="CHEBI:49883"/>
        <label>1</label>
    </ligand>
</feature>
<feature type="binding site" evidence="1">
    <location>
        <position position="387"/>
    </location>
    <ligand>
        <name>[4Fe-4S] cluster</name>
        <dbReference type="ChEBI" id="CHEBI:49883"/>
        <label>1</label>
    </ligand>
</feature>
<feature type="binding site" evidence="1">
    <location>
        <position position="391"/>
    </location>
    <ligand>
        <name>[4Fe-4S] cluster</name>
        <dbReference type="ChEBI" id="CHEBI:49883"/>
        <label>2</label>
    </ligand>
</feature>
<feature type="binding site" evidence="1">
    <location>
        <position position="420"/>
    </location>
    <ligand>
        <name>[4Fe-4S] cluster</name>
        <dbReference type="ChEBI" id="CHEBI:49883"/>
        <label>2</label>
    </ligand>
</feature>
<feature type="binding site" evidence="1">
    <location>
        <position position="423"/>
    </location>
    <ligand>
        <name>[4Fe-4S] cluster</name>
        <dbReference type="ChEBI" id="CHEBI:49883"/>
        <label>2</label>
    </ligand>
</feature>
<feature type="binding site" evidence="1">
    <location>
        <position position="426"/>
    </location>
    <ligand>
        <name>[4Fe-4S] cluster</name>
        <dbReference type="ChEBI" id="CHEBI:49883"/>
        <label>2</label>
    </ligand>
</feature>
<feature type="binding site" evidence="1">
    <location>
        <position position="430"/>
    </location>
    <ligand>
        <name>[4Fe-4S] cluster</name>
        <dbReference type="ChEBI" id="CHEBI:49883"/>
        <label>1</label>
    </ligand>
</feature>
<evidence type="ECO:0000255" key="1">
    <source>
        <dbReference type="HAMAP-Rule" id="MF_00461"/>
    </source>
</evidence>
<evidence type="ECO:0000256" key="2">
    <source>
        <dbReference type="SAM" id="MobiDB-lite"/>
    </source>
</evidence>
<evidence type="ECO:0000269" key="3">
    <source>
    </source>
</evidence>
<evidence type="ECO:0000303" key="4">
    <source>
    </source>
</evidence>
<evidence type="ECO:0000305" key="5"/>
<accession>D5ARZ1</accession>
<gene>
    <name evidence="1 4" type="primary">rnfC</name>
    <name type="ordered locus">RCAP_rcc03289</name>
</gene>
<comment type="function">
    <text evidence="1 3">Part of a membrane-bound complex that couples electron transfer with translocation of ions across the membrane (By similarity). Required for nitrogen fixation. Stabilizes RnfB (PubMed:9154934).</text>
</comment>
<comment type="cofactor">
    <cofactor evidence="1">
        <name>[4Fe-4S] cluster</name>
        <dbReference type="ChEBI" id="CHEBI:49883"/>
    </cofactor>
    <text evidence="1">Binds 2 [4Fe-4S] clusters per subunit.</text>
</comment>
<comment type="subunit">
    <text evidence="1">The complex is composed of six subunits: RnfA, RnfB, RnfC, RnfD, RnfE and RnfG.</text>
</comment>
<comment type="subcellular location">
    <subcellularLocation>
        <location evidence="1 3">Cellular chromatophore membrane</location>
        <topology evidence="1 3">Peripheral membrane protein</topology>
    </subcellularLocation>
</comment>
<comment type="similarity">
    <text evidence="1">Belongs to the 4Fe4S bacterial-type ferredoxin family. RnfC subfamily.</text>
</comment>
<keyword id="KW-0004">4Fe-4S</keyword>
<keyword id="KW-0249">Electron transport</keyword>
<keyword id="KW-0408">Iron</keyword>
<keyword id="KW-0411">Iron-sulfur</keyword>
<keyword id="KW-0472">Membrane</keyword>
<keyword id="KW-0479">Metal-binding</keyword>
<keyword id="KW-0535">Nitrogen fixation</keyword>
<keyword id="KW-1185">Reference proteome</keyword>
<keyword id="KW-0677">Repeat</keyword>
<keyword id="KW-1278">Translocase</keyword>
<keyword id="KW-0813">Transport</keyword>
<dbReference type="EC" id="7.-.-.-" evidence="1 5"/>
<dbReference type="EMBL" id="CP001312">
    <property type="protein sequence ID" value="ADE87013.1"/>
    <property type="molecule type" value="Genomic_DNA"/>
</dbReference>
<dbReference type="SMR" id="D5ARZ1"/>
<dbReference type="STRING" id="272942.RCAP_rcc03289"/>
<dbReference type="GeneID" id="31492069"/>
<dbReference type="KEGG" id="rcp:RCAP_rcc03289"/>
<dbReference type="eggNOG" id="COG4656">
    <property type="taxonomic scope" value="Bacteria"/>
</dbReference>
<dbReference type="HOGENOM" id="CLU_010808_6_2_5"/>
<dbReference type="OrthoDB" id="9767754at2"/>
<dbReference type="Proteomes" id="UP000002361">
    <property type="component" value="Chromosome"/>
</dbReference>
<dbReference type="GO" id="GO:0005886">
    <property type="term" value="C:plasma membrane"/>
    <property type="evidence" value="ECO:0007669"/>
    <property type="project" value="UniProtKB-UniRule"/>
</dbReference>
<dbReference type="GO" id="GO:0042717">
    <property type="term" value="C:plasma membrane-derived chromatophore membrane"/>
    <property type="evidence" value="ECO:0007669"/>
    <property type="project" value="UniProtKB-SubCell"/>
</dbReference>
<dbReference type="GO" id="GO:0051539">
    <property type="term" value="F:4 iron, 4 sulfur cluster binding"/>
    <property type="evidence" value="ECO:0007669"/>
    <property type="project" value="UniProtKB-KW"/>
</dbReference>
<dbReference type="GO" id="GO:0009055">
    <property type="term" value="F:electron transfer activity"/>
    <property type="evidence" value="ECO:0007669"/>
    <property type="project" value="InterPro"/>
</dbReference>
<dbReference type="GO" id="GO:0046872">
    <property type="term" value="F:metal ion binding"/>
    <property type="evidence" value="ECO:0007669"/>
    <property type="project" value="UniProtKB-KW"/>
</dbReference>
<dbReference type="GO" id="GO:0022900">
    <property type="term" value="P:electron transport chain"/>
    <property type="evidence" value="ECO:0007669"/>
    <property type="project" value="UniProtKB-UniRule"/>
</dbReference>
<dbReference type="GO" id="GO:0009399">
    <property type="term" value="P:nitrogen fixation"/>
    <property type="evidence" value="ECO:0007669"/>
    <property type="project" value="UniProtKB-KW"/>
</dbReference>
<dbReference type="Gene3D" id="3.10.20.600">
    <property type="match status" value="1"/>
</dbReference>
<dbReference type="Gene3D" id="3.30.70.20">
    <property type="match status" value="1"/>
</dbReference>
<dbReference type="Gene3D" id="3.40.50.11540">
    <property type="entry name" value="NADH-ubiquinone oxidoreductase 51kDa subunit"/>
    <property type="match status" value="1"/>
</dbReference>
<dbReference type="HAMAP" id="MF_00461">
    <property type="entry name" value="RsxC_RnfC"/>
    <property type="match status" value="1"/>
</dbReference>
<dbReference type="InterPro" id="IPR017896">
    <property type="entry name" value="4Fe4S_Fe-S-bd"/>
</dbReference>
<dbReference type="InterPro" id="IPR017900">
    <property type="entry name" value="4Fe4S_Fe_S_CS"/>
</dbReference>
<dbReference type="InterPro" id="IPR010208">
    <property type="entry name" value="Ion_transpt_RnfC/RsxC"/>
</dbReference>
<dbReference type="InterPro" id="IPR011538">
    <property type="entry name" value="Nuo51_FMN-bd"/>
</dbReference>
<dbReference type="InterPro" id="IPR037225">
    <property type="entry name" value="Nuo51_FMN-bd_sf"/>
</dbReference>
<dbReference type="InterPro" id="IPR026902">
    <property type="entry name" value="RnfC_N"/>
</dbReference>
<dbReference type="InterPro" id="IPR019554">
    <property type="entry name" value="Soluble_ligand-bd"/>
</dbReference>
<dbReference type="NCBIfam" id="NF003454">
    <property type="entry name" value="PRK05035.1"/>
    <property type="match status" value="1"/>
</dbReference>
<dbReference type="NCBIfam" id="TIGR01945">
    <property type="entry name" value="rnfC"/>
    <property type="match status" value="1"/>
</dbReference>
<dbReference type="PANTHER" id="PTHR43034">
    <property type="entry name" value="ION-TRANSLOCATING OXIDOREDUCTASE COMPLEX SUBUNIT C"/>
    <property type="match status" value="1"/>
</dbReference>
<dbReference type="PANTHER" id="PTHR43034:SF2">
    <property type="entry name" value="ION-TRANSLOCATING OXIDOREDUCTASE COMPLEX SUBUNIT C"/>
    <property type="match status" value="1"/>
</dbReference>
<dbReference type="Pfam" id="PF01512">
    <property type="entry name" value="Complex1_51K"/>
    <property type="match status" value="1"/>
</dbReference>
<dbReference type="Pfam" id="PF12838">
    <property type="entry name" value="Fer4_7"/>
    <property type="match status" value="1"/>
</dbReference>
<dbReference type="Pfam" id="PF13375">
    <property type="entry name" value="RnfC_N"/>
    <property type="match status" value="1"/>
</dbReference>
<dbReference type="Pfam" id="PF10531">
    <property type="entry name" value="SLBB"/>
    <property type="match status" value="1"/>
</dbReference>
<dbReference type="SUPFAM" id="SSF46548">
    <property type="entry name" value="alpha-helical ferredoxin"/>
    <property type="match status" value="1"/>
</dbReference>
<dbReference type="SUPFAM" id="SSF142019">
    <property type="entry name" value="Nqo1 FMN-binding domain-like"/>
    <property type="match status" value="1"/>
</dbReference>
<dbReference type="PROSITE" id="PS00198">
    <property type="entry name" value="4FE4S_FER_1"/>
    <property type="match status" value="2"/>
</dbReference>
<dbReference type="PROSITE" id="PS51379">
    <property type="entry name" value="4FE4S_FER_2"/>
    <property type="match status" value="2"/>
</dbReference>
<reference key="1">
    <citation type="journal article" date="2010" name="J. Bacteriol.">
        <title>Complete genome sequence of the photosynthetic purple nonsulfur bacterium Rhodobacter capsulatus SB 1003.</title>
        <authorList>
            <person name="Strnad H."/>
            <person name="Lapidus A."/>
            <person name="Paces J."/>
            <person name="Ulbrich P."/>
            <person name="Vlcek C."/>
            <person name="Paces V."/>
            <person name="Haselkorn R."/>
        </authorList>
    </citation>
    <scope>NUCLEOTIDE SEQUENCE [LARGE SCALE GENOMIC DNA]</scope>
    <source>
        <strain>ATCC BAA-309 / NBRC 16581 / SB1003</strain>
    </source>
</reference>
<reference key="2">
    <citation type="journal article" date="1997" name="Biochemistry">
        <title>Membrane localization, topology, and mutual stabilization of the rnfABC gene products in Rhodobacter capsulatus and implications for a new family of energy-coupling NADH oxidoreductases.</title>
        <authorList>
            <person name="Kumagai H."/>
            <person name="Fujiwara T."/>
            <person name="Matsubara H."/>
            <person name="Saeki K."/>
        </authorList>
    </citation>
    <scope>FUNCTION</scope>
    <scope>SUBCELLULAR LOCATION</scope>
    <source>
        <strain>ATCC BAA-309 / NBRC 16581 / SB1003</strain>
    </source>
</reference>
<protein>
    <recommendedName>
        <fullName evidence="1 5">Ion-translocating oxidoreductase complex subunit C</fullName>
        <ecNumber evidence="1 5">7.-.-.-</ecNumber>
    </recommendedName>
    <alternativeName>
        <fullName evidence="5">Nitrogen fixation protein RnfC</fullName>
    </alternativeName>
    <alternativeName>
        <fullName evidence="1 5">Rnf electron transport complex subunit C</fullName>
    </alternativeName>
</protein>
<sequence>MRLPSIATLFHPLQSFSIRGGIHPETHKHLTSECEIETMPMPALIRLPLQQHIGAEAEPIVKRDDLVLKGQLIAKARGPLSANIHAPTSGRVIAVGHFVAPHASGLPVPTITIRPDGEDKWGPHLPRLRPENAAPEEIAAQVAAAGIVGMGGATFPSAVKLNLRAKYDLTTLIINGAECEPYLTCDDRLMRERAEEIADGIGIMARALGVKQVFVAIESNKPQAIEAMTRYNRALGYTFKIHVVPTQYPMGSEKHLVKMITGQETPARALTADLGVVVHNIATAHAVHLAVRYGEPLIARTVTVSGHGIRRPANLRVLIGTPVSEIIAHCGGFTEEPDRLLLGGPMMGMPIQNPRVPVVKGTNGILALTAAETPEAKTMPCIRCGRCVQGCPVGLTPFELNARIHAGDLEGAAKVGLMDCLACGCCSYNCPANLPLVQSFQFAKGKLSERQSRKHQQEETKRLAAARKAREEAIAEAKKQMMLKRKAEMAAKKKAEEAAAAAAMPPPATATAIQGEATP</sequence>
<organism>
    <name type="scientific">Rhodobacter capsulatus (strain ATCC BAA-309 / NBRC 16581 / SB1003)</name>
    <dbReference type="NCBI Taxonomy" id="272942"/>
    <lineage>
        <taxon>Bacteria</taxon>
        <taxon>Pseudomonadati</taxon>
        <taxon>Pseudomonadota</taxon>
        <taxon>Alphaproteobacteria</taxon>
        <taxon>Rhodobacterales</taxon>
        <taxon>Rhodobacter group</taxon>
        <taxon>Rhodobacter</taxon>
    </lineage>
</organism>
<name>RNFC_RHOCB</name>